<feature type="chain" id="PRO_0000165729" description="Probable cytosol aminopeptidase">
    <location>
        <begin position="1"/>
        <end position="497"/>
    </location>
</feature>
<feature type="active site" evidence="1">
    <location>
        <position position="275"/>
    </location>
</feature>
<feature type="active site" evidence="1">
    <location>
        <position position="349"/>
    </location>
</feature>
<feature type="binding site" evidence="1">
    <location>
        <position position="263"/>
    </location>
    <ligand>
        <name>Mn(2+)</name>
        <dbReference type="ChEBI" id="CHEBI:29035"/>
        <label>2</label>
    </ligand>
</feature>
<feature type="binding site" evidence="1">
    <location>
        <position position="268"/>
    </location>
    <ligand>
        <name>Mn(2+)</name>
        <dbReference type="ChEBI" id="CHEBI:29035"/>
        <label>1</label>
    </ligand>
</feature>
<feature type="binding site" evidence="1">
    <location>
        <position position="268"/>
    </location>
    <ligand>
        <name>Mn(2+)</name>
        <dbReference type="ChEBI" id="CHEBI:29035"/>
        <label>2</label>
    </ligand>
</feature>
<feature type="binding site" evidence="1">
    <location>
        <position position="286"/>
    </location>
    <ligand>
        <name>Mn(2+)</name>
        <dbReference type="ChEBI" id="CHEBI:29035"/>
        <label>2</label>
    </ligand>
</feature>
<feature type="binding site" evidence="1">
    <location>
        <position position="345"/>
    </location>
    <ligand>
        <name>Mn(2+)</name>
        <dbReference type="ChEBI" id="CHEBI:29035"/>
        <label>1</label>
    </ligand>
</feature>
<feature type="binding site" evidence="1">
    <location>
        <position position="347"/>
    </location>
    <ligand>
        <name>Mn(2+)</name>
        <dbReference type="ChEBI" id="CHEBI:29035"/>
        <label>1</label>
    </ligand>
</feature>
<feature type="binding site" evidence="1">
    <location>
        <position position="347"/>
    </location>
    <ligand>
        <name>Mn(2+)</name>
        <dbReference type="ChEBI" id="CHEBI:29035"/>
        <label>2</label>
    </ligand>
</feature>
<keyword id="KW-0031">Aminopeptidase</keyword>
<keyword id="KW-0963">Cytoplasm</keyword>
<keyword id="KW-0378">Hydrolase</keyword>
<keyword id="KW-0464">Manganese</keyword>
<keyword id="KW-0479">Metal-binding</keyword>
<keyword id="KW-0645">Protease</keyword>
<sequence length="497" mass="52576">MSKRPSISFSEFEVPQKGVAVVLVAKGGGFADEAAKAVGGAEKIARIADISGFTGALGKTAEAIETTPAGVEKIVLVGVGEPGKLGNDDWLKIGGAAFSQIGNAERVTLTLALPETTIAGDEAADVALGMVLRSYKFDRYKTRKSEENGEPKHAAKITICVADTHSARKTFEVAEAVADGVIQARNLVNEPANILGPVEFAEEAEKLEKLGVKVEVLGEKELKKLGMGALLGVAQGSVRPPRLVVMEWHGAKGKEKPIAFVGKGVVFDTGGISIKPAANMEDMKGDMGGAAAVTGLMRALAGRKAKVNAIGVIGLVENMPDGNAQRPGDIVTSMSGQTIEVINTDAEGRLVLADALHYTNDRFKPRFIINLATLTGAVMVALGQYHAGLFSNDDELADQLYDAGQSTGEKLWRLPLGTEYDKMIDSKFADMKNSAGRYGGSITAAQFLKRFVGETPWAHLDVAGTAMGSPANEYNQSWASGFGVRLLDRLVRDQFES</sequence>
<accession>Q8G1M4</accession>
<accession>G0K830</accession>
<protein>
    <recommendedName>
        <fullName evidence="1">Probable cytosol aminopeptidase</fullName>
        <ecNumber evidence="1">3.4.11.1</ecNumber>
    </recommendedName>
    <alternativeName>
        <fullName evidence="1">Leucine aminopeptidase</fullName>
        <shortName evidence="1">LAP</shortName>
        <ecNumber evidence="1">3.4.11.10</ecNumber>
    </alternativeName>
    <alternativeName>
        <fullName evidence="1">Leucyl aminopeptidase</fullName>
    </alternativeName>
</protein>
<organism>
    <name type="scientific">Brucella suis biovar 1 (strain 1330)</name>
    <dbReference type="NCBI Taxonomy" id="204722"/>
    <lineage>
        <taxon>Bacteria</taxon>
        <taxon>Pseudomonadati</taxon>
        <taxon>Pseudomonadota</taxon>
        <taxon>Alphaproteobacteria</taxon>
        <taxon>Hyphomicrobiales</taxon>
        <taxon>Brucellaceae</taxon>
        <taxon>Brucella/Ochrobactrum group</taxon>
        <taxon>Brucella</taxon>
    </lineage>
</organism>
<gene>
    <name evidence="1" type="primary">pepA</name>
    <name type="ordered locus">BR0689</name>
    <name type="ordered locus">BS1330_I0685</name>
</gene>
<name>AMPA_BRUSU</name>
<comment type="function">
    <text evidence="1">Presumably involved in the processing and regular turnover of intracellular proteins. Catalyzes the removal of unsubstituted N-terminal amino acids from various peptides.</text>
</comment>
<comment type="catalytic activity">
    <reaction evidence="1">
        <text>Release of an N-terminal amino acid, Xaa-|-Yaa-, in which Xaa is preferably Leu, but may be other amino acids including Pro although not Arg or Lys, and Yaa may be Pro. Amino acid amides and methyl esters are also readily hydrolyzed, but rates on arylamides are exceedingly low.</text>
        <dbReference type="EC" id="3.4.11.1"/>
    </reaction>
</comment>
<comment type="catalytic activity">
    <reaction evidence="1">
        <text>Release of an N-terminal amino acid, preferentially leucine, but not glutamic or aspartic acids.</text>
        <dbReference type="EC" id="3.4.11.10"/>
    </reaction>
</comment>
<comment type="cofactor">
    <cofactor evidence="1">
        <name>Mn(2+)</name>
        <dbReference type="ChEBI" id="CHEBI:29035"/>
    </cofactor>
    <text evidence="1">Binds 2 manganese ions per subunit.</text>
</comment>
<comment type="subcellular location">
    <subcellularLocation>
        <location evidence="1">Cytoplasm</location>
    </subcellularLocation>
</comment>
<comment type="similarity">
    <text evidence="1">Belongs to the peptidase M17 family.</text>
</comment>
<evidence type="ECO:0000255" key="1">
    <source>
        <dbReference type="HAMAP-Rule" id="MF_00181"/>
    </source>
</evidence>
<proteinExistence type="inferred from homology"/>
<dbReference type="EC" id="3.4.11.1" evidence="1"/>
<dbReference type="EC" id="3.4.11.10" evidence="1"/>
<dbReference type="EMBL" id="AE014291">
    <property type="protein sequence ID" value="AAN29618.1"/>
    <property type="molecule type" value="Genomic_DNA"/>
</dbReference>
<dbReference type="EMBL" id="CP002997">
    <property type="protein sequence ID" value="AEM18035.1"/>
    <property type="molecule type" value="Genomic_DNA"/>
</dbReference>
<dbReference type="RefSeq" id="WP_004690711.1">
    <property type="nucleotide sequence ID" value="NZ_KN046804.1"/>
</dbReference>
<dbReference type="SMR" id="Q8G1M4"/>
<dbReference type="KEGG" id="bms:BR0689"/>
<dbReference type="KEGG" id="bsi:BS1330_I0685"/>
<dbReference type="PATRIC" id="fig|204722.21.peg.1486"/>
<dbReference type="HOGENOM" id="CLU_013734_6_0_5"/>
<dbReference type="PhylomeDB" id="Q8G1M4"/>
<dbReference type="Proteomes" id="UP000007104">
    <property type="component" value="Chromosome I"/>
</dbReference>
<dbReference type="GO" id="GO:0005737">
    <property type="term" value="C:cytoplasm"/>
    <property type="evidence" value="ECO:0007669"/>
    <property type="project" value="UniProtKB-SubCell"/>
</dbReference>
<dbReference type="GO" id="GO:0030145">
    <property type="term" value="F:manganese ion binding"/>
    <property type="evidence" value="ECO:0007669"/>
    <property type="project" value="UniProtKB-UniRule"/>
</dbReference>
<dbReference type="GO" id="GO:0070006">
    <property type="term" value="F:metalloaminopeptidase activity"/>
    <property type="evidence" value="ECO:0007669"/>
    <property type="project" value="InterPro"/>
</dbReference>
<dbReference type="GO" id="GO:0006508">
    <property type="term" value="P:proteolysis"/>
    <property type="evidence" value="ECO:0007669"/>
    <property type="project" value="UniProtKB-KW"/>
</dbReference>
<dbReference type="CDD" id="cd00433">
    <property type="entry name" value="Peptidase_M17"/>
    <property type="match status" value="1"/>
</dbReference>
<dbReference type="Gene3D" id="3.40.220.10">
    <property type="entry name" value="Leucine Aminopeptidase, subunit E, domain 1"/>
    <property type="match status" value="1"/>
</dbReference>
<dbReference type="Gene3D" id="3.40.630.10">
    <property type="entry name" value="Zn peptidases"/>
    <property type="match status" value="1"/>
</dbReference>
<dbReference type="HAMAP" id="MF_00181">
    <property type="entry name" value="Cytosol_peptidase_M17"/>
    <property type="match status" value="1"/>
</dbReference>
<dbReference type="InterPro" id="IPR011356">
    <property type="entry name" value="Leucine_aapep/pepB"/>
</dbReference>
<dbReference type="InterPro" id="IPR043472">
    <property type="entry name" value="Macro_dom-like"/>
</dbReference>
<dbReference type="InterPro" id="IPR000819">
    <property type="entry name" value="Peptidase_M17_C"/>
</dbReference>
<dbReference type="InterPro" id="IPR023042">
    <property type="entry name" value="Peptidase_M17_leu_NH2_pept"/>
</dbReference>
<dbReference type="InterPro" id="IPR008283">
    <property type="entry name" value="Peptidase_M17_N"/>
</dbReference>
<dbReference type="NCBIfam" id="NF002073">
    <property type="entry name" value="PRK00913.1-2"/>
    <property type="match status" value="1"/>
</dbReference>
<dbReference type="NCBIfam" id="NF002074">
    <property type="entry name" value="PRK00913.1-4"/>
    <property type="match status" value="1"/>
</dbReference>
<dbReference type="NCBIfam" id="NF002075">
    <property type="entry name" value="PRK00913.2-2"/>
    <property type="match status" value="1"/>
</dbReference>
<dbReference type="NCBIfam" id="NF002077">
    <property type="entry name" value="PRK00913.2-4"/>
    <property type="match status" value="1"/>
</dbReference>
<dbReference type="NCBIfam" id="NF002083">
    <property type="entry name" value="PRK00913.3-5"/>
    <property type="match status" value="1"/>
</dbReference>
<dbReference type="PANTHER" id="PTHR11963:SF23">
    <property type="entry name" value="CYTOSOL AMINOPEPTIDASE"/>
    <property type="match status" value="1"/>
</dbReference>
<dbReference type="PANTHER" id="PTHR11963">
    <property type="entry name" value="LEUCINE AMINOPEPTIDASE-RELATED"/>
    <property type="match status" value="1"/>
</dbReference>
<dbReference type="Pfam" id="PF00883">
    <property type="entry name" value="Peptidase_M17"/>
    <property type="match status" value="1"/>
</dbReference>
<dbReference type="Pfam" id="PF02789">
    <property type="entry name" value="Peptidase_M17_N"/>
    <property type="match status" value="1"/>
</dbReference>
<dbReference type="PRINTS" id="PR00481">
    <property type="entry name" value="LAMNOPPTDASE"/>
</dbReference>
<dbReference type="SUPFAM" id="SSF52949">
    <property type="entry name" value="Macro domain-like"/>
    <property type="match status" value="1"/>
</dbReference>
<dbReference type="SUPFAM" id="SSF53187">
    <property type="entry name" value="Zn-dependent exopeptidases"/>
    <property type="match status" value="1"/>
</dbReference>
<dbReference type="PROSITE" id="PS00631">
    <property type="entry name" value="CYTOSOL_AP"/>
    <property type="match status" value="1"/>
</dbReference>
<reference key="1">
    <citation type="journal article" date="2002" name="Proc. Natl. Acad. Sci. U.S.A.">
        <title>The Brucella suis genome reveals fundamental similarities between animal and plant pathogens and symbionts.</title>
        <authorList>
            <person name="Paulsen I.T."/>
            <person name="Seshadri R."/>
            <person name="Nelson K.E."/>
            <person name="Eisen J.A."/>
            <person name="Heidelberg J.F."/>
            <person name="Read T.D."/>
            <person name="Dodson R.J."/>
            <person name="Umayam L.A."/>
            <person name="Brinkac L.M."/>
            <person name="Beanan M.J."/>
            <person name="Daugherty S.C."/>
            <person name="DeBoy R.T."/>
            <person name="Durkin A.S."/>
            <person name="Kolonay J.F."/>
            <person name="Madupu R."/>
            <person name="Nelson W.C."/>
            <person name="Ayodeji B."/>
            <person name="Kraul M."/>
            <person name="Shetty J."/>
            <person name="Malek J.A."/>
            <person name="Van Aken S.E."/>
            <person name="Riedmuller S."/>
            <person name="Tettelin H."/>
            <person name="Gill S.R."/>
            <person name="White O."/>
            <person name="Salzberg S.L."/>
            <person name="Hoover D.L."/>
            <person name="Lindler L.E."/>
            <person name="Halling S.M."/>
            <person name="Boyle S.M."/>
            <person name="Fraser C.M."/>
        </authorList>
    </citation>
    <scope>NUCLEOTIDE SEQUENCE [LARGE SCALE GENOMIC DNA]</scope>
    <source>
        <strain>1330</strain>
    </source>
</reference>
<reference key="2">
    <citation type="journal article" date="2011" name="J. Bacteriol.">
        <title>Revised genome sequence of Brucella suis 1330.</title>
        <authorList>
            <person name="Tae H."/>
            <person name="Shallom S."/>
            <person name="Settlage R."/>
            <person name="Preston D."/>
            <person name="Adams L.G."/>
            <person name="Garner H.R."/>
        </authorList>
    </citation>
    <scope>NUCLEOTIDE SEQUENCE [LARGE SCALE GENOMIC DNA]</scope>
    <source>
        <strain>1330</strain>
    </source>
</reference>